<keyword id="KW-0067">ATP-binding</keyword>
<keyword id="KW-0131">Cell cycle</keyword>
<keyword id="KW-0132">Cell division</keyword>
<keyword id="KW-0133">Cell shape</keyword>
<keyword id="KW-0961">Cell wall biogenesis/degradation</keyword>
<keyword id="KW-0963">Cytoplasm</keyword>
<keyword id="KW-0436">Ligase</keyword>
<keyword id="KW-0547">Nucleotide-binding</keyword>
<keyword id="KW-0573">Peptidoglycan synthesis</keyword>
<organism>
    <name type="scientific">Streptococcus pneumoniae (strain CGSP14)</name>
    <dbReference type="NCBI Taxonomy" id="516950"/>
    <lineage>
        <taxon>Bacteria</taxon>
        <taxon>Bacillati</taxon>
        <taxon>Bacillota</taxon>
        <taxon>Bacilli</taxon>
        <taxon>Lactobacillales</taxon>
        <taxon>Streptococcaceae</taxon>
        <taxon>Streptococcus</taxon>
    </lineage>
</organism>
<protein>
    <recommendedName>
        <fullName evidence="1">UDP-N-acetylmuramate--L-alanine ligase</fullName>
        <ecNumber evidence="1">6.3.2.8</ecNumber>
    </recommendedName>
    <alternativeName>
        <fullName evidence="1">UDP-N-acetylmuramoyl-L-alanine synthetase</fullName>
    </alternativeName>
</protein>
<accession>B2IQY8</accession>
<gene>
    <name evidence="1" type="primary">murC</name>
    <name type="ordered locus">SPCG_1506</name>
</gene>
<sequence>MSKTYHFIGIKGSGMSALALMLHQMGHKVQGSDVEKYYFTQRGLEQAGITILPFDEKNLDGDMEIIAGNAFRPDNNVEIAYADQNGISYKRYHEFLGSFMRDFVSMGVAGAHGKTSTTGMLSHVLSHITDTSFLIGDGTGRGSANAKYFVFESDEYERHFMPYHPEYSIITNIDFDHPDYFTSLEDVFNAFNDYAKQITKGLFVYGEDAELRKITSDAPIYYYGFEAEGNDFVASDLLRSTTGSTFTVHFRGQNLGQFHIPTFGRHNIMNATAVIGLLYTAGFDLNLVREHLKTFAGVKRRFTEKIVNDTVIIDDFAHHPTEIIATLDAARQKYPSKEIVAVFQPHTFTRTIALLDDFAHALNQADAVYLAQIYGSAREVDHGDVKVEDLANKINKKHQVITVENVSPLLDHDNAVYVFMGAGDIQTYEYSFERLLSNLTSNVQ</sequence>
<reference key="1">
    <citation type="journal article" date="2009" name="BMC Genomics">
        <title>Genome evolution driven by host adaptations results in a more virulent and antimicrobial-resistant Streptococcus pneumoniae serotype 14.</title>
        <authorList>
            <person name="Ding F."/>
            <person name="Tang P."/>
            <person name="Hsu M.-H."/>
            <person name="Cui P."/>
            <person name="Hu S."/>
            <person name="Yu J."/>
            <person name="Chiu C.-H."/>
        </authorList>
    </citation>
    <scope>NUCLEOTIDE SEQUENCE [LARGE SCALE GENOMIC DNA]</scope>
    <source>
        <strain>CGSP14</strain>
    </source>
</reference>
<evidence type="ECO:0000255" key="1">
    <source>
        <dbReference type="HAMAP-Rule" id="MF_00046"/>
    </source>
</evidence>
<dbReference type="EC" id="6.3.2.8" evidence="1"/>
<dbReference type="EMBL" id="CP001033">
    <property type="protein sequence ID" value="ACB90758.1"/>
    <property type="molecule type" value="Genomic_DNA"/>
</dbReference>
<dbReference type="RefSeq" id="WP_000048090.1">
    <property type="nucleotide sequence ID" value="NC_010582.1"/>
</dbReference>
<dbReference type="SMR" id="B2IQY8"/>
<dbReference type="KEGG" id="spw:SPCG_1506"/>
<dbReference type="HOGENOM" id="CLU_028104_1_0_9"/>
<dbReference type="UniPathway" id="UPA00219"/>
<dbReference type="GO" id="GO:0005737">
    <property type="term" value="C:cytoplasm"/>
    <property type="evidence" value="ECO:0007669"/>
    <property type="project" value="UniProtKB-SubCell"/>
</dbReference>
<dbReference type="GO" id="GO:0005524">
    <property type="term" value="F:ATP binding"/>
    <property type="evidence" value="ECO:0007669"/>
    <property type="project" value="UniProtKB-UniRule"/>
</dbReference>
<dbReference type="GO" id="GO:0008763">
    <property type="term" value="F:UDP-N-acetylmuramate-L-alanine ligase activity"/>
    <property type="evidence" value="ECO:0007669"/>
    <property type="project" value="UniProtKB-UniRule"/>
</dbReference>
<dbReference type="GO" id="GO:0051301">
    <property type="term" value="P:cell division"/>
    <property type="evidence" value="ECO:0007669"/>
    <property type="project" value="UniProtKB-KW"/>
</dbReference>
<dbReference type="GO" id="GO:0071555">
    <property type="term" value="P:cell wall organization"/>
    <property type="evidence" value="ECO:0007669"/>
    <property type="project" value="UniProtKB-KW"/>
</dbReference>
<dbReference type="GO" id="GO:0009252">
    <property type="term" value="P:peptidoglycan biosynthetic process"/>
    <property type="evidence" value="ECO:0007669"/>
    <property type="project" value="UniProtKB-UniRule"/>
</dbReference>
<dbReference type="GO" id="GO:0008360">
    <property type="term" value="P:regulation of cell shape"/>
    <property type="evidence" value="ECO:0007669"/>
    <property type="project" value="UniProtKB-KW"/>
</dbReference>
<dbReference type="Gene3D" id="3.90.190.20">
    <property type="entry name" value="Mur ligase, C-terminal domain"/>
    <property type="match status" value="1"/>
</dbReference>
<dbReference type="Gene3D" id="3.40.1190.10">
    <property type="entry name" value="Mur-like, catalytic domain"/>
    <property type="match status" value="1"/>
</dbReference>
<dbReference type="Gene3D" id="3.40.50.720">
    <property type="entry name" value="NAD(P)-binding Rossmann-like Domain"/>
    <property type="match status" value="1"/>
</dbReference>
<dbReference type="HAMAP" id="MF_00046">
    <property type="entry name" value="MurC"/>
    <property type="match status" value="1"/>
</dbReference>
<dbReference type="InterPro" id="IPR036565">
    <property type="entry name" value="Mur-like_cat_sf"/>
</dbReference>
<dbReference type="InterPro" id="IPR004101">
    <property type="entry name" value="Mur_ligase_C"/>
</dbReference>
<dbReference type="InterPro" id="IPR036615">
    <property type="entry name" value="Mur_ligase_C_dom_sf"/>
</dbReference>
<dbReference type="InterPro" id="IPR013221">
    <property type="entry name" value="Mur_ligase_cen"/>
</dbReference>
<dbReference type="InterPro" id="IPR000713">
    <property type="entry name" value="Mur_ligase_N"/>
</dbReference>
<dbReference type="InterPro" id="IPR050061">
    <property type="entry name" value="MurCDEF_pg_biosynth"/>
</dbReference>
<dbReference type="InterPro" id="IPR005758">
    <property type="entry name" value="UDP-N-AcMur_Ala_ligase_MurC"/>
</dbReference>
<dbReference type="NCBIfam" id="TIGR01082">
    <property type="entry name" value="murC"/>
    <property type="match status" value="1"/>
</dbReference>
<dbReference type="PANTHER" id="PTHR43445:SF3">
    <property type="entry name" value="UDP-N-ACETYLMURAMATE--L-ALANINE LIGASE"/>
    <property type="match status" value="1"/>
</dbReference>
<dbReference type="PANTHER" id="PTHR43445">
    <property type="entry name" value="UDP-N-ACETYLMURAMATE--L-ALANINE LIGASE-RELATED"/>
    <property type="match status" value="1"/>
</dbReference>
<dbReference type="Pfam" id="PF01225">
    <property type="entry name" value="Mur_ligase"/>
    <property type="match status" value="1"/>
</dbReference>
<dbReference type="Pfam" id="PF02875">
    <property type="entry name" value="Mur_ligase_C"/>
    <property type="match status" value="1"/>
</dbReference>
<dbReference type="Pfam" id="PF08245">
    <property type="entry name" value="Mur_ligase_M"/>
    <property type="match status" value="1"/>
</dbReference>
<dbReference type="SUPFAM" id="SSF51984">
    <property type="entry name" value="MurCD N-terminal domain"/>
    <property type="match status" value="1"/>
</dbReference>
<dbReference type="SUPFAM" id="SSF53623">
    <property type="entry name" value="MurD-like peptide ligases, catalytic domain"/>
    <property type="match status" value="1"/>
</dbReference>
<dbReference type="SUPFAM" id="SSF53244">
    <property type="entry name" value="MurD-like peptide ligases, peptide-binding domain"/>
    <property type="match status" value="1"/>
</dbReference>
<feature type="chain" id="PRO_1000091144" description="UDP-N-acetylmuramate--L-alanine ligase">
    <location>
        <begin position="1"/>
        <end position="444"/>
    </location>
</feature>
<feature type="binding site" evidence="1">
    <location>
        <begin position="110"/>
        <end position="116"/>
    </location>
    <ligand>
        <name>ATP</name>
        <dbReference type="ChEBI" id="CHEBI:30616"/>
    </ligand>
</feature>
<name>MURC_STRPS</name>
<proteinExistence type="inferred from homology"/>
<comment type="function">
    <text evidence="1">Cell wall formation.</text>
</comment>
<comment type="catalytic activity">
    <reaction evidence="1">
        <text>UDP-N-acetyl-alpha-D-muramate + L-alanine + ATP = UDP-N-acetyl-alpha-D-muramoyl-L-alanine + ADP + phosphate + H(+)</text>
        <dbReference type="Rhea" id="RHEA:23372"/>
        <dbReference type="ChEBI" id="CHEBI:15378"/>
        <dbReference type="ChEBI" id="CHEBI:30616"/>
        <dbReference type="ChEBI" id="CHEBI:43474"/>
        <dbReference type="ChEBI" id="CHEBI:57972"/>
        <dbReference type="ChEBI" id="CHEBI:70757"/>
        <dbReference type="ChEBI" id="CHEBI:83898"/>
        <dbReference type="ChEBI" id="CHEBI:456216"/>
        <dbReference type="EC" id="6.3.2.8"/>
    </reaction>
</comment>
<comment type="pathway">
    <text evidence="1">Cell wall biogenesis; peptidoglycan biosynthesis.</text>
</comment>
<comment type="subcellular location">
    <subcellularLocation>
        <location evidence="1">Cytoplasm</location>
    </subcellularLocation>
</comment>
<comment type="similarity">
    <text evidence="1">Belongs to the MurCDEF family.</text>
</comment>